<organism>
    <name type="scientific">Bos taurus</name>
    <name type="common">Bovine</name>
    <dbReference type="NCBI Taxonomy" id="9913"/>
    <lineage>
        <taxon>Eukaryota</taxon>
        <taxon>Metazoa</taxon>
        <taxon>Chordata</taxon>
        <taxon>Craniata</taxon>
        <taxon>Vertebrata</taxon>
        <taxon>Euteleostomi</taxon>
        <taxon>Mammalia</taxon>
        <taxon>Eutheria</taxon>
        <taxon>Laurasiatheria</taxon>
        <taxon>Artiodactyla</taxon>
        <taxon>Ruminantia</taxon>
        <taxon>Pecora</taxon>
        <taxon>Bovidae</taxon>
        <taxon>Bovinae</taxon>
        <taxon>Bos</taxon>
    </lineage>
</organism>
<accession>P11052</accession>
<protein>
    <recommendedName>
        <fullName>Granulocyte-macrophage colony-stimulating factor</fullName>
        <shortName>GM-CSF</shortName>
    </recommendedName>
    <alternativeName>
        <fullName>Colony-stimulating factor</fullName>
        <shortName>CSF</shortName>
    </alternativeName>
</protein>
<dbReference type="EMBL" id="U22385">
    <property type="protein sequence ID" value="AAA66075.1"/>
    <property type="molecule type" value="mRNA"/>
</dbReference>
<dbReference type="PIR" id="JL0037">
    <property type="entry name" value="FQBOGM"/>
</dbReference>
<dbReference type="RefSeq" id="NP_776452.1">
    <property type="nucleotide sequence ID" value="NM_174027.2"/>
</dbReference>
<dbReference type="SMR" id="P11052"/>
<dbReference type="FunCoup" id="P11052">
    <property type="interactions" value="280"/>
</dbReference>
<dbReference type="STRING" id="9913.ENSBTAP00000002054"/>
<dbReference type="GlyCosmos" id="P11052">
    <property type="glycosylation" value="3 sites, No reported glycans"/>
</dbReference>
<dbReference type="GlyGen" id="P11052">
    <property type="glycosylation" value="3 sites"/>
</dbReference>
<dbReference type="PaxDb" id="9913-ENSBTAP00000002054"/>
<dbReference type="Ensembl" id="ENSBTAT00000002054.2">
    <property type="protein sequence ID" value="ENSBTAP00000002054.1"/>
    <property type="gene ID" value="ENSBTAG00000001570.4"/>
</dbReference>
<dbReference type="GeneID" id="281095"/>
<dbReference type="KEGG" id="bta:281095"/>
<dbReference type="CTD" id="1437"/>
<dbReference type="VEuPathDB" id="HostDB:ENSBTAG00000001570"/>
<dbReference type="VGNC" id="VGNC:27755">
    <property type="gene designation" value="CSF2"/>
</dbReference>
<dbReference type="eggNOG" id="ENOG502TDUI">
    <property type="taxonomic scope" value="Eukaryota"/>
</dbReference>
<dbReference type="GeneTree" id="ENSGT00390000013425"/>
<dbReference type="HOGENOM" id="CLU_152286_0_0_1"/>
<dbReference type="InParanoid" id="P11052"/>
<dbReference type="OMA" id="SCETQII"/>
<dbReference type="OrthoDB" id="9633166at2759"/>
<dbReference type="TreeFam" id="TF338611"/>
<dbReference type="Reactome" id="R-BTA-512988">
    <property type="pathway name" value="Interleukin-3, Interleukin-5 and GM-CSF signaling"/>
</dbReference>
<dbReference type="Reactome" id="R-BTA-5673001">
    <property type="pathway name" value="RAF/MAP kinase cascade"/>
</dbReference>
<dbReference type="Reactome" id="R-BTA-912526">
    <property type="pathway name" value="Interleukin receptor SHC signaling"/>
</dbReference>
<dbReference type="Proteomes" id="UP000009136">
    <property type="component" value="Chromosome 7"/>
</dbReference>
<dbReference type="Bgee" id="ENSBTAG00000001570">
    <property type="expression patterns" value="Expressed in intramuscular adipose tissue and 19 other cell types or tissues"/>
</dbReference>
<dbReference type="GO" id="GO:0005615">
    <property type="term" value="C:extracellular space"/>
    <property type="evidence" value="ECO:0000250"/>
    <property type="project" value="UniProtKB"/>
</dbReference>
<dbReference type="GO" id="GO:0030526">
    <property type="term" value="C:granulocyte macrophage colony-stimulating factor receptor complex"/>
    <property type="evidence" value="ECO:0007669"/>
    <property type="project" value="Ensembl"/>
</dbReference>
<dbReference type="GO" id="GO:0043231">
    <property type="term" value="C:intracellular membrane-bounded organelle"/>
    <property type="evidence" value="ECO:0007669"/>
    <property type="project" value="Ensembl"/>
</dbReference>
<dbReference type="GO" id="GO:0005125">
    <property type="term" value="F:cytokine activity"/>
    <property type="evidence" value="ECO:0000250"/>
    <property type="project" value="UniProtKB"/>
</dbReference>
<dbReference type="GO" id="GO:0005129">
    <property type="term" value="F:granulocyte macrophage colony-stimulating factor receptor binding"/>
    <property type="evidence" value="ECO:0007669"/>
    <property type="project" value="InterPro"/>
</dbReference>
<dbReference type="GO" id="GO:0008083">
    <property type="term" value="F:growth factor activity"/>
    <property type="evidence" value="ECO:0007669"/>
    <property type="project" value="UniProtKB-KW"/>
</dbReference>
<dbReference type="GO" id="GO:0008283">
    <property type="term" value="P:cell population proliferation"/>
    <property type="evidence" value="ECO:0007669"/>
    <property type="project" value="Ensembl"/>
</dbReference>
<dbReference type="GO" id="GO:0007259">
    <property type="term" value="P:cell surface receptor signaling pathway via JAK-STAT"/>
    <property type="evidence" value="ECO:0007669"/>
    <property type="project" value="Ensembl"/>
</dbReference>
<dbReference type="GO" id="GO:0097011">
    <property type="term" value="P:cellular response to granulocyte macrophage colony-stimulating factor stimulus"/>
    <property type="evidence" value="ECO:0007669"/>
    <property type="project" value="Ensembl"/>
</dbReference>
<dbReference type="GO" id="GO:0001892">
    <property type="term" value="P:embryonic placenta development"/>
    <property type="evidence" value="ECO:0007669"/>
    <property type="project" value="Ensembl"/>
</dbReference>
<dbReference type="GO" id="GO:0038157">
    <property type="term" value="P:granulocyte-macrophage colony-stimulating factor signaling pathway"/>
    <property type="evidence" value="ECO:0007669"/>
    <property type="project" value="Ensembl"/>
</dbReference>
<dbReference type="GO" id="GO:0006955">
    <property type="term" value="P:immune response"/>
    <property type="evidence" value="ECO:0007669"/>
    <property type="project" value="InterPro"/>
</dbReference>
<dbReference type="GO" id="GO:0072651">
    <property type="term" value="P:interferon-tau production"/>
    <property type="evidence" value="ECO:0000250"/>
    <property type="project" value="AgBase"/>
</dbReference>
<dbReference type="GO" id="GO:0030225">
    <property type="term" value="P:macrophage differentiation"/>
    <property type="evidence" value="ECO:0007669"/>
    <property type="project" value="Ensembl"/>
</dbReference>
<dbReference type="GO" id="GO:0030224">
    <property type="term" value="P:monocyte differentiation"/>
    <property type="evidence" value="ECO:0007669"/>
    <property type="project" value="Ensembl"/>
</dbReference>
<dbReference type="GO" id="GO:0030099">
    <property type="term" value="P:myeloid cell differentiation"/>
    <property type="evidence" value="ECO:0000318"/>
    <property type="project" value="GO_Central"/>
</dbReference>
<dbReference type="GO" id="GO:0043011">
    <property type="term" value="P:myeloid dendritic cell differentiation"/>
    <property type="evidence" value="ECO:0007669"/>
    <property type="project" value="Ensembl"/>
</dbReference>
<dbReference type="GO" id="GO:0045892">
    <property type="term" value="P:negative regulation of DNA-templated transcription"/>
    <property type="evidence" value="ECO:0007669"/>
    <property type="project" value="Ensembl"/>
</dbReference>
<dbReference type="GO" id="GO:2001240">
    <property type="term" value="P:negative regulation of extrinsic apoptotic signaling pathway in absence of ligand"/>
    <property type="evidence" value="ECO:0007669"/>
    <property type="project" value="Ensembl"/>
</dbReference>
<dbReference type="GO" id="GO:0030223">
    <property type="term" value="P:neutrophil differentiation"/>
    <property type="evidence" value="ECO:0007669"/>
    <property type="project" value="Ensembl"/>
</dbReference>
<dbReference type="GO" id="GO:0032747">
    <property type="term" value="P:positive regulation of interleukin-23 production"/>
    <property type="evidence" value="ECO:0007669"/>
    <property type="project" value="Ensembl"/>
</dbReference>
<dbReference type="GO" id="GO:0070665">
    <property type="term" value="P:positive regulation of leukocyte proliferation"/>
    <property type="evidence" value="ECO:0007669"/>
    <property type="project" value="Ensembl"/>
</dbReference>
<dbReference type="GO" id="GO:0010744">
    <property type="term" value="P:positive regulation of macrophage derived foam cell differentiation"/>
    <property type="evidence" value="ECO:0007669"/>
    <property type="project" value="Ensembl"/>
</dbReference>
<dbReference type="GO" id="GO:0071803">
    <property type="term" value="P:positive regulation of podosome assembly"/>
    <property type="evidence" value="ECO:0007669"/>
    <property type="project" value="Ensembl"/>
</dbReference>
<dbReference type="GO" id="GO:1904075">
    <property type="term" value="P:positive regulation of trophectodermal cell proliferation"/>
    <property type="evidence" value="ECO:0000250"/>
    <property type="project" value="AgBase"/>
</dbReference>
<dbReference type="CDD" id="cd00040">
    <property type="entry name" value="CSF2"/>
    <property type="match status" value="1"/>
</dbReference>
<dbReference type="FunFam" id="1.20.1250.10:FF:000028">
    <property type="entry name" value="Granulocyte-macrophage colony-stimulating factor"/>
    <property type="match status" value="1"/>
</dbReference>
<dbReference type="Gene3D" id="1.20.1250.10">
    <property type="match status" value="1"/>
</dbReference>
<dbReference type="InterPro" id="IPR009079">
    <property type="entry name" value="4_helix_cytokine-like_core"/>
</dbReference>
<dbReference type="InterPro" id="IPR000773">
    <property type="entry name" value="GM_colony-stim-fac"/>
</dbReference>
<dbReference type="PANTHER" id="PTHR10059:SF0">
    <property type="entry name" value="GRANULOCYTE-MACROPHAGE COLONY-STIMULATING FACTOR"/>
    <property type="match status" value="1"/>
</dbReference>
<dbReference type="PANTHER" id="PTHR10059">
    <property type="entry name" value="GRANULOCYTE-MACROPHAGE COLONY-STIMULATING FACTOR GM-CSF"/>
    <property type="match status" value="1"/>
</dbReference>
<dbReference type="Pfam" id="PF01109">
    <property type="entry name" value="GM_CSF"/>
    <property type="match status" value="1"/>
</dbReference>
<dbReference type="PRINTS" id="PR00693">
    <property type="entry name" value="GMCSFACTOR"/>
</dbReference>
<dbReference type="SMART" id="SM00040">
    <property type="entry name" value="CSF2"/>
    <property type="match status" value="1"/>
</dbReference>
<dbReference type="SUPFAM" id="SSF47266">
    <property type="entry name" value="4-helical cytokines"/>
    <property type="match status" value="1"/>
</dbReference>
<dbReference type="PROSITE" id="PS00702">
    <property type="entry name" value="GM_CSF"/>
    <property type="match status" value="1"/>
</dbReference>
<gene>
    <name type="primary">CSF2</name>
</gene>
<keyword id="KW-0202">Cytokine</keyword>
<keyword id="KW-1015">Disulfide bond</keyword>
<keyword id="KW-0325">Glycoprotein</keyword>
<keyword id="KW-0339">Growth factor</keyword>
<keyword id="KW-1185">Reference proteome</keyword>
<keyword id="KW-0964">Secreted</keyword>
<keyword id="KW-0732">Signal</keyword>
<feature type="signal peptide">
    <location>
        <begin position="1"/>
        <end position="17"/>
    </location>
</feature>
<feature type="chain" id="PRO_0000005860" description="Granulocyte-macrophage colony-stimulating factor">
    <location>
        <begin position="18"/>
        <end position="143"/>
    </location>
</feature>
<feature type="glycosylation site" description="O-linked (GalNAc...) threonine" evidence="1">
    <location>
        <position position="27"/>
    </location>
</feature>
<feature type="glycosylation site" description="N-linked (GlcNAc...) asparagine" evidence="2">
    <location>
        <position position="44"/>
    </location>
</feature>
<feature type="glycosylation site" description="N-linked (GlcNAc...) asparagine" evidence="2">
    <location>
        <position position="54"/>
    </location>
</feature>
<feature type="disulfide bond" evidence="1">
    <location>
        <begin position="70"/>
        <end position="112"/>
    </location>
</feature>
<feature type="disulfide bond" evidence="1">
    <location>
        <begin position="104"/>
        <end position="137"/>
    </location>
</feature>
<name>CSF2_BOVIN</name>
<evidence type="ECO:0000250" key="1"/>
<evidence type="ECO:0000255" key="2"/>
<evidence type="ECO:0000305" key="3"/>
<proteinExistence type="evidence at transcript level"/>
<comment type="function">
    <text evidence="1">Cytokine that stimulates the growth and differentiation of hematopoietic precursor cells from various lineages, including granulocytes, macrophages, eosinophils and erythrocytes.</text>
</comment>
<comment type="subunit">
    <text evidence="1">Monomer. The signaling GM-CSF receptor complex is a dodecamer of two head-to-head hexamers of two alpha, two beta, and two ligand subunits (By similarity).</text>
</comment>
<comment type="subcellular location">
    <subcellularLocation>
        <location>Secreted</location>
    </subcellularLocation>
</comment>
<comment type="similarity">
    <text evidence="3">Belongs to the GM-CSF family.</text>
</comment>
<reference key="1">
    <citation type="journal article" date="1988" name="Mol. Immunol.">
        <title>Bovine GM-CSF: molecular cloning and biological activity of the recombinant protein.</title>
        <authorList>
            <person name="Maliszewski C.R."/>
            <person name="Schoenborn M.A."/>
            <person name="Cerretti D.P."/>
            <person name="Wignall J.M."/>
            <person name="Picha K.S."/>
            <person name="Cosman D."/>
            <person name="Tushinski R.J."/>
            <person name="Gillis S."/>
            <person name="Baker P.E."/>
        </authorList>
    </citation>
    <scope>NUCLEOTIDE SEQUENCE [MRNA]</scope>
</reference>
<reference key="2">
    <citation type="journal article" date="1989" name="Vet. Immunol. Immunopathol.">
        <title>Cloning and expression of the cDNA for bovine granulocyte-macrophage colony-stimulating factor.</title>
        <authorList>
            <person name="Leong S.R."/>
            <person name="Flaggs G.M."/>
            <person name="Lawman M.J.P."/>
            <person name="Gray P.W."/>
        </authorList>
    </citation>
    <scope>NUCLEOTIDE SEQUENCE [MRNA]</scope>
</reference>
<sequence>MWLQNLLLLGTVVCSFSAPTRPPNTATRPWQHVDAIKEALSLLNHSSDTDAVMNDTEVVSEKFDSQEPTCLQTRLKLYKNGLQGSLTSLMGSLTMMATHYEKHCPPTPETSCGTQFISFKNFKEDLKEFLFIIPFDCWEPAQK</sequence>